<proteinExistence type="evidence at protein level"/>
<keyword id="KW-0025">Alternative splicing</keyword>
<keyword id="KW-0966">Cell projection</keyword>
<keyword id="KW-0967">Endosome</keyword>
<keyword id="KW-0268">Exocytosis</keyword>
<keyword id="KW-0343">GTPase activation</keyword>
<keyword id="KW-0597">Phosphoprotein</keyword>
<keyword id="KW-1267">Proteomics identification</keyword>
<keyword id="KW-1185">Reference proteome</keyword>
<keyword id="KW-0770">Synapse</keyword>
<protein>
    <recommendedName>
        <fullName evidence="11">Rho GTPase-activating protein 44</fullName>
    </recommendedName>
    <alternativeName>
        <fullName>NPC-A-10</fullName>
    </alternativeName>
    <alternativeName>
        <fullName>Rho-type GTPase-activating protein RICH2</fullName>
    </alternativeName>
    <alternativeName>
        <fullName>RhoGAP interacting with CIP4 homologs protein 2</fullName>
        <shortName>RICH-2</shortName>
    </alternativeName>
</protein>
<organism>
    <name type="scientific">Homo sapiens</name>
    <name type="common">Human</name>
    <dbReference type="NCBI Taxonomy" id="9606"/>
    <lineage>
        <taxon>Eukaryota</taxon>
        <taxon>Metazoa</taxon>
        <taxon>Chordata</taxon>
        <taxon>Craniata</taxon>
        <taxon>Vertebrata</taxon>
        <taxon>Euteleostomi</taxon>
        <taxon>Mammalia</taxon>
        <taxon>Eutheria</taxon>
        <taxon>Euarchontoglires</taxon>
        <taxon>Primates</taxon>
        <taxon>Haplorrhini</taxon>
        <taxon>Catarrhini</taxon>
        <taxon>Hominidae</taxon>
        <taxon>Homo</taxon>
    </lineage>
</organism>
<gene>
    <name evidence="12" type="primary">ARHGAP44</name>
    <name type="synonym">KIAA0672</name>
    <name type="synonym">RICH2</name>
</gene>
<dbReference type="EMBL" id="AB014572">
    <property type="protein sequence ID" value="BAA31647.2"/>
    <property type="status" value="ALT_INIT"/>
    <property type="molecule type" value="mRNA"/>
</dbReference>
<dbReference type="EMBL" id="AK294538">
    <property type="protein sequence ID" value="BAG57745.1"/>
    <property type="molecule type" value="mRNA"/>
</dbReference>
<dbReference type="EMBL" id="AC005274">
    <property type="status" value="NOT_ANNOTATED_CDS"/>
    <property type="molecule type" value="Genomic_DNA"/>
</dbReference>
<dbReference type="EMBL" id="AC005277">
    <property type="status" value="NOT_ANNOTATED_CDS"/>
    <property type="molecule type" value="Genomic_DNA"/>
</dbReference>
<dbReference type="EMBL" id="BC117412">
    <property type="protein sequence ID" value="AAI17413.1"/>
    <property type="molecule type" value="mRNA"/>
</dbReference>
<dbReference type="EMBL" id="BC117416">
    <property type="protein sequence ID" value="AAI17417.1"/>
    <property type="molecule type" value="mRNA"/>
</dbReference>
<dbReference type="EMBL" id="BC143853">
    <property type="protein sequence ID" value="AAI43854.1"/>
    <property type="molecule type" value="mRNA"/>
</dbReference>
<dbReference type="EMBL" id="AY320403">
    <property type="protein sequence ID" value="AAP73805.1"/>
    <property type="status" value="ALT_SEQ"/>
    <property type="molecule type" value="mRNA"/>
</dbReference>
<dbReference type="EMBL" id="AL096728">
    <property type="protein sequence ID" value="CAB46376.1"/>
    <property type="molecule type" value="mRNA"/>
</dbReference>
<dbReference type="CCDS" id="CCDS45616.1">
    <molecule id="Q17R89-1"/>
</dbReference>
<dbReference type="CCDS" id="CCDS82077.1">
    <molecule id="Q17R89-3"/>
</dbReference>
<dbReference type="PIR" id="A59433">
    <property type="entry name" value="A59433"/>
</dbReference>
<dbReference type="RefSeq" id="NP_001308093.1">
    <molecule id="Q17R89-2"/>
    <property type="nucleotide sequence ID" value="NM_001321164.2"/>
</dbReference>
<dbReference type="RefSeq" id="NP_001308095.1">
    <molecule id="Q17R89-3"/>
    <property type="nucleotide sequence ID" value="NM_001321166.2"/>
</dbReference>
<dbReference type="RefSeq" id="NP_001308097.1">
    <property type="nucleotide sequence ID" value="NM_001321168.1"/>
</dbReference>
<dbReference type="RefSeq" id="NP_055674.4">
    <molecule id="Q17R89-1"/>
    <property type="nucleotide sequence ID" value="NM_014859.5"/>
</dbReference>
<dbReference type="SMR" id="Q17R89"/>
<dbReference type="BioGRID" id="115241">
    <property type="interactions" value="41"/>
</dbReference>
<dbReference type="FunCoup" id="Q17R89">
    <property type="interactions" value="536"/>
</dbReference>
<dbReference type="IntAct" id="Q17R89">
    <property type="interactions" value="22"/>
</dbReference>
<dbReference type="MINT" id="Q17R89"/>
<dbReference type="STRING" id="9606.ENSP00000368994"/>
<dbReference type="GlyGen" id="Q17R89">
    <property type="glycosylation" value="2 sites"/>
</dbReference>
<dbReference type="iPTMnet" id="Q17R89"/>
<dbReference type="PhosphoSitePlus" id="Q17R89"/>
<dbReference type="SwissPalm" id="Q17R89"/>
<dbReference type="BioMuta" id="ARHGAP44"/>
<dbReference type="DMDM" id="121948837"/>
<dbReference type="jPOST" id="Q17R89"/>
<dbReference type="MassIVE" id="Q17R89"/>
<dbReference type="PaxDb" id="9606-ENSP00000368994"/>
<dbReference type="PeptideAtlas" id="Q17R89"/>
<dbReference type="ProteomicsDB" id="61137">
    <molecule id="Q17R89-1"/>
</dbReference>
<dbReference type="ProteomicsDB" id="849"/>
<dbReference type="Pumba" id="Q17R89"/>
<dbReference type="Antibodypedia" id="47980">
    <property type="antibodies" value="114 antibodies from 21 providers"/>
</dbReference>
<dbReference type="DNASU" id="9912"/>
<dbReference type="Ensembl" id="ENST00000340825.7">
    <molecule id="Q17R89-3"/>
    <property type="protein sequence ID" value="ENSP00000342566.3"/>
    <property type="gene ID" value="ENSG00000006740.18"/>
</dbReference>
<dbReference type="Ensembl" id="ENST00000379672.10">
    <molecule id="Q17R89-1"/>
    <property type="protein sequence ID" value="ENSP00000368994.5"/>
    <property type="gene ID" value="ENSG00000006740.18"/>
</dbReference>
<dbReference type="GeneID" id="9912"/>
<dbReference type="KEGG" id="hsa:9912"/>
<dbReference type="MANE-Select" id="ENST00000379672.10">
    <property type="protein sequence ID" value="ENSP00000368994.5"/>
    <property type="RefSeq nucleotide sequence ID" value="NM_014859.6"/>
    <property type="RefSeq protein sequence ID" value="NP_055674.4"/>
</dbReference>
<dbReference type="UCSC" id="uc002gnr.5">
    <molecule id="Q17R89-1"/>
    <property type="organism name" value="human"/>
</dbReference>
<dbReference type="AGR" id="HGNC:29096"/>
<dbReference type="CTD" id="9912"/>
<dbReference type="DisGeNET" id="9912"/>
<dbReference type="GeneCards" id="ARHGAP44"/>
<dbReference type="HGNC" id="HGNC:29096">
    <property type="gene designation" value="ARHGAP44"/>
</dbReference>
<dbReference type="HPA" id="ENSG00000006740">
    <property type="expression patterns" value="Tissue enhanced (brain)"/>
</dbReference>
<dbReference type="MIM" id="617716">
    <property type="type" value="gene"/>
</dbReference>
<dbReference type="neXtProt" id="NX_Q17R89"/>
<dbReference type="OpenTargets" id="ENSG00000006740"/>
<dbReference type="VEuPathDB" id="HostDB:ENSG00000006740"/>
<dbReference type="eggNOG" id="KOG4270">
    <property type="taxonomic scope" value="Eukaryota"/>
</dbReference>
<dbReference type="GeneTree" id="ENSGT00940000157296"/>
<dbReference type="InParanoid" id="Q17R89"/>
<dbReference type="OMA" id="SDWIQAS"/>
<dbReference type="OrthoDB" id="19923at2759"/>
<dbReference type="PAN-GO" id="Q17R89">
    <property type="GO annotations" value="11 GO annotations based on evolutionary models"/>
</dbReference>
<dbReference type="PhylomeDB" id="Q17R89"/>
<dbReference type="TreeFam" id="TF316514"/>
<dbReference type="PathwayCommons" id="Q17R89"/>
<dbReference type="Reactome" id="R-HSA-8980692">
    <property type="pathway name" value="RHOA GTPase cycle"/>
</dbReference>
<dbReference type="Reactome" id="R-HSA-9013148">
    <property type="pathway name" value="CDC42 GTPase cycle"/>
</dbReference>
<dbReference type="Reactome" id="R-HSA-9013149">
    <property type="pathway name" value="RAC1 GTPase cycle"/>
</dbReference>
<dbReference type="SignaLink" id="Q17R89"/>
<dbReference type="SIGNOR" id="Q17R89"/>
<dbReference type="BioGRID-ORCS" id="9912">
    <property type="hits" value="14 hits in 1156 CRISPR screens"/>
</dbReference>
<dbReference type="CD-CODE" id="FB4E32DD">
    <property type="entry name" value="Presynaptic clusters and postsynaptic densities"/>
</dbReference>
<dbReference type="ChiTaRS" id="ARHGAP44">
    <property type="organism name" value="human"/>
</dbReference>
<dbReference type="GenomeRNAi" id="9912"/>
<dbReference type="Pharos" id="Q17R89">
    <property type="development level" value="Tbio"/>
</dbReference>
<dbReference type="PRO" id="PR:Q17R89"/>
<dbReference type="Proteomes" id="UP000005640">
    <property type="component" value="Chromosome 17"/>
</dbReference>
<dbReference type="RNAct" id="Q17R89">
    <property type="molecule type" value="protein"/>
</dbReference>
<dbReference type="Bgee" id="ENSG00000006740">
    <property type="expression patterns" value="Expressed in lateral nuclear group of thalamus and 175 other cell types or tissues"/>
</dbReference>
<dbReference type="ExpressionAtlas" id="Q17R89">
    <property type="expression patterns" value="baseline and differential"/>
</dbReference>
<dbReference type="GO" id="GO:0005829">
    <property type="term" value="C:cytosol"/>
    <property type="evidence" value="ECO:0000304"/>
    <property type="project" value="Reactome"/>
</dbReference>
<dbReference type="GO" id="GO:0030425">
    <property type="term" value="C:dendrite"/>
    <property type="evidence" value="ECO:0000250"/>
    <property type="project" value="UniProtKB"/>
</dbReference>
<dbReference type="GO" id="GO:0043197">
    <property type="term" value="C:dendritic spine"/>
    <property type="evidence" value="ECO:0000318"/>
    <property type="project" value="GO_Central"/>
</dbReference>
<dbReference type="GO" id="GO:0098978">
    <property type="term" value="C:glutamatergic synapse"/>
    <property type="evidence" value="ECO:0007669"/>
    <property type="project" value="Ensembl"/>
</dbReference>
<dbReference type="GO" id="GO:0031256">
    <property type="term" value="C:leading edge membrane"/>
    <property type="evidence" value="ECO:0000314"/>
    <property type="project" value="FlyBase"/>
</dbReference>
<dbReference type="GO" id="GO:0005886">
    <property type="term" value="C:plasma membrane"/>
    <property type="evidence" value="ECO:0000318"/>
    <property type="project" value="GO_Central"/>
</dbReference>
<dbReference type="GO" id="GO:0014069">
    <property type="term" value="C:postsynaptic density"/>
    <property type="evidence" value="ECO:0000318"/>
    <property type="project" value="GO_Central"/>
</dbReference>
<dbReference type="GO" id="GO:0048786">
    <property type="term" value="C:presynaptic active zone"/>
    <property type="evidence" value="ECO:0000318"/>
    <property type="project" value="GO_Central"/>
</dbReference>
<dbReference type="GO" id="GO:0055037">
    <property type="term" value="C:recycling endosome"/>
    <property type="evidence" value="ECO:0007669"/>
    <property type="project" value="UniProtKB-SubCell"/>
</dbReference>
<dbReference type="GO" id="GO:0005096">
    <property type="term" value="F:GTPase activator activity"/>
    <property type="evidence" value="ECO:0000250"/>
    <property type="project" value="UniProtKB"/>
</dbReference>
<dbReference type="GO" id="GO:0005543">
    <property type="term" value="F:phospholipid binding"/>
    <property type="evidence" value="ECO:0000314"/>
    <property type="project" value="FlyBase"/>
</dbReference>
<dbReference type="GO" id="GO:0031267">
    <property type="term" value="F:small GTPase binding"/>
    <property type="evidence" value="ECO:0007669"/>
    <property type="project" value="Ensembl"/>
</dbReference>
<dbReference type="GO" id="GO:0006887">
    <property type="term" value="P:exocytosis"/>
    <property type="evidence" value="ECO:0007669"/>
    <property type="project" value="UniProtKB-KW"/>
</dbReference>
<dbReference type="GO" id="GO:0099010">
    <property type="term" value="P:modification of postsynaptic structure"/>
    <property type="evidence" value="ECO:0007669"/>
    <property type="project" value="Ensembl"/>
</dbReference>
<dbReference type="GO" id="GO:0050804">
    <property type="term" value="P:modulation of chemical synaptic transmission"/>
    <property type="evidence" value="ECO:0007669"/>
    <property type="project" value="Ensembl"/>
</dbReference>
<dbReference type="GO" id="GO:0051490">
    <property type="term" value="P:negative regulation of filopodium assembly"/>
    <property type="evidence" value="ECO:0000250"/>
    <property type="project" value="UniProtKB"/>
</dbReference>
<dbReference type="GO" id="GO:0035021">
    <property type="term" value="P:negative regulation of Rac protein signal transduction"/>
    <property type="evidence" value="ECO:0000318"/>
    <property type="project" value="GO_Central"/>
</dbReference>
<dbReference type="GO" id="GO:0032956">
    <property type="term" value="P:regulation of actin cytoskeleton organization"/>
    <property type="evidence" value="ECO:0000318"/>
    <property type="project" value="GO_Central"/>
</dbReference>
<dbReference type="GO" id="GO:0061001">
    <property type="term" value="P:regulation of dendritic spine morphogenesis"/>
    <property type="evidence" value="ECO:0000318"/>
    <property type="project" value="GO_Central"/>
</dbReference>
<dbReference type="GO" id="GO:0043087">
    <property type="term" value="P:regulation of GTPase activity"/>
    <property type="evidence" value="ECO:0000250"/>
    <property type="project" value="UniProtKB"/>
</dbReference>
<dbReference type="GO" id="GO:0099152">
    <property type="term" value="P:regulation of neurotransmitter receptor transport, endosome to postsynaptic membrane"/>
    <property type="evidence" value="ECO:0007669"/>
    <property type="project" value="Ensembl"/>
</dbReference>
<dbReference type="GO" id="GO:0051056">
    <property type="term" value="P:regulation of small GTPase mediated signal transduction"/>
    <property type="evidence" value="ECO:0000304"/>
    <property type="project" value="Reactome"/>
</dbReference>
<dbReference type="GO" id="GO:0007165">
    <property type="term" value="P:signal transduction"/>
    <property type="evidence" value="ECO:0007669"/>
    <property type="project" value="InterPro"/>
</dbReference>
<dbReference type="CDD" id="cd07619">
    <property type="entry name" value="BAR_Rich2"/>
    <property type="match status" value="1"/>
</dbReference>
<dbReference type="FunFam" id="1.10.555.10:FF:000001">
    <property type="entry name" value="Rho GTPase activating protein 44"/>
    <property type="match status" value="1"/>
</dbReference>
<dbReference type="FunFam" id="1.20.1270.60:FF:000018">
    <property type="entry name" value="Rho GTPase activating protein 44"/>
    <property type="match status" value="1"/>
</dbReference>
<dbReference type="Gene3D" id="1.20.1270.60">
    <property type="entry name" value="Arfaptin homology (AH) domain/BAR domain"/>
    <property type="match status" value="1"/>
</dbReference>
<dbReference type="Gene3D" id="1.10.555.10">
    <property type="entry name" value="Rho GTPase activation protein"/>
    <property type="match status" value="1"/>
</dbReference>
<dbReference type="InterPro" id="IPR027267">
    <property type="entry name" value="AH/BAR_dom_sf"/>
</dbReference>
<dbReference type="InterPro" id="IPR004148">
    <property type="entry name" value="BAR_dom"/>
</dbReference>
<dbReference type="InterPro" id="IPR047165">
    <property type="entry name" value="RHG17/44/SH3BP1-like"/>
</dbReference>
<dbReference type="InterPro" id="IPR008936">
    <property type="entry name" value="Rho_GTPase_activation_prot"/>
</dbReference>
<dbReference type="InterPro" id="IPR000198">
    <property type="entry name" value="RhoGAP_dom"/>
</dbReference>
<dbReference type="PANTHER" id="PTHR14130">
    <property type="entry name" value="3BP-1 RELATED RHOGAP"/>
    <property type="match status" value="1"/>
</dbReference>
<dbReference type="PANTHER" id="PTHR14130:SF13">
    <property type="entry name" value="RHO GTPASE-ACTIVATING PROTEIN 44"/>
    <property type="match status" value="1"/>
</dbReference>
<dbReference type="Pfam" id="PF03114">
    <property type="entry name" value="BAR"/>
    <property type="match status" value="1"/>
</dbReference>
<dbReference type="Pfam" id="PF00620">
    <property type="entry name" value="RhoGAP"/>
    <property type="match status" value="1"/>
</dbReference>
<dbReference type="SMART" id="SM00721">
    <property type="entry name" value="BAR"/>
    <property type="match status" value="1"/>
</dbReference>
<dbReference type="SMART" id="SM00324">
    <property type="entry name" value="RhoGAP"/>
    <property type="match status" value="1"/>
</dbReference>
<dbReference type="SUPFAM" id="SSF103657">
    <property type="entry name" value="BAR/IMD domain-like"/>
    <property type="match status" value="1"/>
</dbReference>
<dbReference type="SUPFAM" id="SSF48350">
    <property type="entry name" value="GTPase activation domain, GAP"/>
    <property type="match status" value="1"/>
</dbReference>
<dbReference type="PROSITE" id="PS51021">
    <property type="entry name" value="BAR"/>
    <property type="match status" value="1"/>
</dbReference>
<dbReference type="PROSITE" id="PS50238">
    <property type="entry name" value="RHOGAP"/>
    <property type="match status" value="1"/>
</dbReference>
<name>RHG44_HUMAN</name>
<evidence type="ECO:0000250" key="1">
    <source>
        <dbReference type="UniProtKB" id="F1LQX4"/>
    </source>
</evidence>
<evidence type="ECO:0000250" key="2">
    <source>
        <dbReference type="UniProtKB" id="Q5SSM3"/>
    </source>
</evidence>
<evidence type="ECO:0000255" key="3">
    <source>
        <dbReference type="PROSITE-ProRule" id="PRU00172"/>
    </source>
</evidence>
<evidence type="ECO:0000255" key="4">
    <source>
        <dbReference type="PROSITE-ProRule" id="PRU00361"/>
    </source>
</evidence>
<evidence type="ECO:0000256" key="5">
    <source>
        <dbReference type="SAM" id="MobiDB-lite"/>
    </source>
</evidence>
<evidence type="ECO:0000269" key="6">
    <source>
    </source>
</evidence>
<evidence type="ECO:0000269" key="7">
    <source>
    </source>
</evidence>
<evidence type="ECO:0000303" key="8">
    <source>
    </source>
</evidence>
<evidence type="ECO:0000303" key="9">
    <source>
    </source>
</evidence>
<evidence type="ECO:0000303" key="10">
    <source>
    </source>
</evidence>
<evidence type="ECO:0000305" key="11"/>
<evidence type="ECO:0000312" key="12">
    <source>
        <dbReference type="HGNC" id="HGNC:29096"/>
    </source>
</evidence>
<sequence length="818" mass="89247">MKKQFNRMRQLANQTVGRAEKTEVLSEDLLQVEKRLELVKQVSHSTHKKLTACLQGQQGAEADKRSKKLPLTTLAQCLMEGSAILGDDTLLGKMLKLCGETEDKLAQELIHFELQVERDVIEPLFLLAEVEIPNIQKQRKHLAKLVLDMDSSRTRWQQTSKSSGLSSSLQPAGAKADALREEMEEAANRVEICRDQLSADMYSFVAKEIDYANYFQTLIEVQAEYHRKSLTLLQAVLPQIKAQQEAWVEKPSFGKPLEEHLTISGREIAFPIEACVTMLLECGMQEEGLFRVAPSASKLKKLKAALDCCVVDVQEYSADPHAIAGALKSYLRELPEPLMTFELYDEWIQASNVQEQDKKLQALWNACEKLPKANHNNIRYLIKFLSKLSEYQDVNKMTPSNMAIVLGPNLLWPQAEGNITEMMTTVSLQIVGIIEPIIQHADWFFPGEIEFNITGNYGSPVHVNHNANYSSMPSPDMDPADRRQPEQARRPLSVATDNMMLEFYKKDGLRKIQSMGVRVMDTNWVARRGSSAGRKVSCAPPSMQPPAPPAELAAPLPSPLPEQPLDSPAAPALSPSGLGLQPGPERTSTTKSKELSPGSAQKGSPGSSQGTACAGTQPGAQPGAQPGASPSPSQPPADQSPHTLRKVSKKLAPIPPKVPFGQPGAMADQSAGQPSPVSLSPTPPSTPSPYGLSYPQGYSLASGQLSPAAAPPLASPSVFTSTLSKSRPTPKPRQRPTLPPPQPPTVNLSASSPQSTEAPMLDGMSPGESMSTDLVHFDIPSIHIELGSTLRLSPLEHMRRHSVTDKRDSEEESESTAL</sequence>
<accession>Q17R89</accession>
<accession>A6NCP5</accession>
<accession>A8MQB2</accession>
<accession>O75160</accession>
<accession>Q7Z5Z7</accession>
<accession>Q9Y4Q4</accession>
<comment type="function">
    <text evidence="1 2 6">GTPase-activating protein (GAP) that stimulates the GTPase activity of Rho-type GTPases. Thereby, controls Rho-type GTPases cycling between their active GTP-bound and inactive GDP-bound states. Acts as a GAP at least for CDC42 and RAC1 (PubMed:11431473). In neurons, is involved in dendritic spine formation and synaptic plasticity in a specific RAC1-GAP activity (By similarity). Limits the initiation of exploratory dendritic filopodia. Recruited to actin-patches that seed filopodia, binds specifically to plasma membrane sections that are deformed inward by acto-myosin mediated contractile forces. Acts through GAP activity on RAC1 to reduce actin polymerization necessary for filopodia formation (By similarity). In association with SHANK3, promotes GRIA1 exocytosis from recycling endosomes and spine morphological changes associated to long-term potentiation (By similarity).</text>
</comment>
<comment type="subunit">
    <text evidence="7">Interacts with BST2 (via cytoplasmic domain). Interacts (probably via PDZ-binding motif) with SHANK3 (via PDZ domain); the interaction takes place in dendritic spines and promotes GRIA1 exocytosis.</text>
</comment>
<comment type="interaction">
    <interactant intactId="EBI-720416">
        <id>Q17R89</id>
    </interactant>
    <interactant intactId="EBI-1057327">
        <id>P49662</id>
        <label>CASP4</label>
    </interactant>
    <organismsDiffer>false</organismsDiffer>
    <experiments>2</experiments>
</comment>
<comment type="interaction">
    <interactant intactId="EBI-10238335">
        <id>Q17R89-2</id>
    </interactant>
    <interactant intactId="EBI-739936">
        <id>Q15642</id>
        <label>TRIP10</label>
    </interactant>
    <organismsDiffer>false</organismsDiffer>
    <experiments>3</experiments>
</comment>
<comment type="subcellular location">
    <subcellularLocation>
        <location evidence="2">Cell projection</location>
        <location evidence="2">Dendritic spine</location>
    </subcellularLocation>
    <subcellularLocation>
        <location evidence="2">Recycling endosome</location>
    </subcellularLocation>
    <subcellularLocation>
        <location evidence="2">Presynapse</location>
    </subcellularLocation>
    <subcellularLocation>
        <location evidence="1">Cell projection</location>
        <location evidence="1">Dendrite</location>
    </subcellularLocation>
    <text evidence="1 2">In CA1 hippocampal synapses, detected at both presynaptic and postsynaptic sites (By similarity). Located in convoluted dendritic plasma membrane sections enriched in polymerized actin and myosin (patches) along dendrites where often emerge filopodia (By similarity).</text>
</comment>
<comment type="alternative products">
    <event type="alternative splicing"/>
    <isoform>
        <id>Q17R89-1</id>
        <name>1</name>
        <sequence type="displayed"/>
    </isoform>
    <isoform>
        <id>Q17R89-2</id>
        <name>2</name>
        <sequence type="described" ref="VSP_053616 VSP_053617 VSP_053618"/>
    </isoform>
    <isoform>
        <id>Q17R89-3</id>
        <name>3</name>
        <sequence type="described" ref="VSP_053616"/>
    </isoform>
</comment>
<comment type="tissue specificity">
    <text evidence="6">Highly expressed in brain. Expressed at weak level in other tissues.</text>
</comment>
<comment type="domain">
    <text evidence="1 2">Rho-GAP domain is required to promote GRIA1 exocytosis from recycling endosomes. Rho-GAP and BAR domains are necessary for the control of long-term potentiation in hippocampal neurons (By similarity). In dendrites, BAR domain mediates the recruitment to patches where plasma membrane is deformed by acto-myosin mediated contractile forces (By similarity).</text>
</comment>
<comment type="sequence caution" evidence="11">
    <conflict type="erroneous initiation">
        <sequence resource="EMBL-CDS" id="AAP73805"/>
    </conflict>
    <text>Truncated N-terminus.</text>
</comment>
<comment type="sequence caution" evidence="11">
    <conflict type="frameshift">
        <sequence resource="EMBL-CDS" id="AAP73805"/>
    </conflict>
</comment>
<comment type="sequence caution" evidence="11">
    <conflict type="erroneous initiation">
        <sequence resource="EMBL-CDS" id="BAA31647"/>
    </conflict>
    <text>Extended N-terminus.</text>
</comment>
<reference key="1">
    <citation type="journal article" date="1998" name="DNA Res.">
        <title>Prediction of the coding sequences of unidentified human genes. X. The complete sequences of 100 new cDNA clones from brain which can code for large proteins in vitro.</title>
        <authorList>
            <person name="Ishikawa K."/>
            <person name="Nagase T."/>
            <person name="Suyama M."/>
            <person name="Miyajima N."/>
            <person name="Tanaka A."/>
            <person name="Kotani H."/>
            <person name="Nomura N."/>
            <person name="Ohara O."/>
        </authorList>
    </citation>
    <scope>NUCLEOTIDE SEQUENCE [LARGE SCALE MRNA] (ISOFORM 1)</scope>
    <source>
        <tissue>Brain</tissue>
    </source>
</reference>
<reference key="2">
    <citation type="journal article" date="2004" name="Nat. Genet.">
        <title>Complete sequencing and characterization of 21,243 full-length human cDNAs.</title>
        <authorList>
            <person name="Ota T."/>
            <person name="Suzuki Y."/>
            <person name="Nishikawa T."/>
            <person name="Otsuki T."/>
            <person name="Sugiyama T."/>
            <person name="Irie R."/>
            <person name="Wakamatsu A."/>
            <person name="Hayashi K."/>
            <person name="Sato H."/>
            <person name="Nagai K."/>
            <person name="Kimura K."/>
            <person name="Makita H."/>
            <person name="Sekine M."/>
            <person name="Obayashi M."/>
            <person name="Nishi T."/>
            <person name="Shibahara T."/>
            <person name="Tanaka T."/>
            <person name="Ishii S."/>
            <person name="Yamamoto J."/>
            <person name="Saito K."/>
            <person name="Kawai Y."/>
            <person name="Isono Y."/>
            <person name="Nakamura Y."/>
            <person name="Nagahari K."/>
            <person name="Murakami K."/>
            <person name="Yasuda T."/>
            <person name="Iwayanagi T."/>
            <person name="Wagatsuma M."/>
            <person name="Shiratori A."/>
            <person name="Sudo H."/>
            <person name="Hosoiri T."/>
            <person name="Kaku Y."/>
            <person name="Kodaira H."/>
            <person name="Kondo H."/>
            <person name="Sugawara M."/>
            <person name="Takahashi M."/>
            <person name="Kanda K."/>
            <person name="Yokoi T."/>
            <person name="Furuya T."/>
            <person name="Kikkawa E."/>
            <person name="Omura Y."/>
            <person name="Abe K."/>
            <person name="Kamihara K."/>
            <person name="Katsuta N."/>
            <person name="Sato K."/>
            <person name="Tanikawa M."/>
            <person name="Yamazaki M."/>
            <person name="Ninomiya K."/>
            <person name="Ishibashi T."/>
            <person name="Yamashita H."/>
            <person name="Murakawa K."/>
            <person name="Fujimori K."/>
            <person name="Tanai H."/>
            <person name="Kimata M."/>
            <person name="Watanabe M."/>
            <person name="Hiraoka S."/>
            <person name="Chiba Y."/>
            <person name="Ishida S."/>
            <person name="Ono Y."/>
            <person name="Takiguchi S."/>
            <person name="Watanabe S."/>
            <person name="Yosida M."/>
            <person name="Hotuta T."/>
            <person name="Kusano J."/>
            <person name="Kanehori K."/>
            <person name="Takahashi-Fujii A."/>
            <person name="Hara H."/>
            <person name="Tanase T.-O."/>
            <person name="Nomura Y."/>
            <person name="Togiya S."/>
            <person name="Komai F."/>
            <person name="Hara R."/>
            <person name="Takeuchi K."/>
            <person name="Arita M."/>
            <person name="Imose N."/>
            <person name="Musashino K."/>
            <person name="Yuuki H."/>
            <person name="Oshima A."/>
            <person name="Sasaki N."/>
            <person name="Aotsuka S."/>
            <person name="Yoshikawa Y."/>
            <person name="Matsunawa H."/>
            <person name="Ichihara T."/>
            <person name="Shiohata N."/>
            <person name="Sano S."/>
            <person name="Moriya S."/>
            <person name="Momiyama H."/>
            <person name="Satoh N."/>
            <person name="Takami S."/>
            <person name="Terashima Y."/>
            <person name="Suzuki O."/>
            <person name="Nakagawa S."/>
            <person name="Senoh A."/>
            <person name="Mizoguchi H."/>
            <person name="Goto Y."/>
            <person name="Shimizu F."/>
            <person name="Wakebe H."/>
            <person name="Hishigaki H."/>
            <person name="Watanabe T."/>
            <person name="Sugiyama A."/>
            <person name="Takemoto M."/>
            <person name="Kawakami B."/>
            <person name="Yamazaki M."/>
            <person name="Watanabe K."/>
            <person name="Kumagai A."/>
            <person name="Itakura S."/>
            <person name="Fukuzumi Y."/>
            <person name="Fujimori Y."/>
            <person name="Komiyama M."/>
            <person name="Tashiro H."/>
            <person name="Tanigami A."/>
            <person name="Fujiwara T."/>
            <person name="Ono T."/>
            <person name="Yamada K."/>
            <person name="Fujii Y."/>
            <person name="Ozaki K."/>
            <person name="Hirao M."/>
            <person name="Ohmori Y."/>
            <person name="Kawabata A."/>
            <person name="Hikiji T."/>
            <person name="Kobatake N."/>
            <person name="Inagaki H."/>
            <person name="Ikema Y."/>
            <person name="Okamoto S."/>
            <person name="Okitani R."/>
            <person name="Kawakami T."/>
            <person name="Noguchi S."/>
            <person name="Itoh T."/>
            <person name="Shigeta K."/>
            <person name="Senba T."/>
            <person name="Matsumura K."/>
            <person name="Nakajima Y."/>
            <person name="Mizuno T."/>
            <person name="Morinaga M."/>
            <person name="Sasaki M."/>
            <person name="Togashi T."/>
            <person name="Oyama M."/>
            <person name="Hata H."/>
            <person name="Watanabe M."/>
            <person name="Komatsu T."/>
            <person name="Mizushima-Sugano J."/>
            <person name="Satoh T."/>
            <person name="Shirai Y."/>
            <person name="Takahashi Y."/>
            <person name="Nakagawa K."/>
            <person name="Okumura K."/>
            <person name="Nagase T."/>
            <person name="Nomura N."/>
            <person name="Kikuchi H."/>
            <person name="Masuho Y."/>
            <person name="Yamashita R."/>
            <person name="Nakai K."/>
            <person name="Yada T."/>
            <person name="Nakamura Y."/>
            <person name="Ohara O."/>
            <person name="Isogai T."/>
            <person name="Sugano S."/>
        </authorList>
    </citation>
    <scope>NUCLEOTIDE SEQUENCE [LARGE SCALE MRNA] (ISOFORM 3)</scope>
    <source>
        <tissue>Amygdala</tissue>
    </source>
</reference>
<reference key="3">
    <citation type="journal article" date="2006" name="Nature">
        <title>DNA sequence of human chromosome 17 and analysis of rearrangement in the human lineage.</title>
        <authorList>
            <person name="Zody M.C."/>
            <person name="Garber M."/>
            <person name="Adams D.J."/>
            <person name="Sharpe T."/>
            <person name="Harrow J."/>
            <person name="Lupski J.R."/>
            <person name="Nicholson C."/>
            <person name="Searle S.M."/>
            <person name="Wilming L."/>
            <person name="Young S.K."/>
            <person name="Abouelleil A."/>
            <person name="Allen N.R."/>
            <person name="Bi W."/>
            <person name="Bloom T."/>
            <person name="Borowsky M.L."/>
            <person name="Bugalter B.E."/>
            <person name="Butler J."/>
            <person name="Chang J.L."/>
            <person name="Chen C.-K."/>
            <person name="Cook A."/>
            <person name="Corum B."/>
            <person name="Cuomo C.A."/>
            <person name="de Jong P.J."/>
            <person name="DeCaprio D."/>
            <person name="Dewar K."/>
            <person name="FitzGerald M."/>
            <person name="Gilbert J."/>
            <person name="Gibson R."/>
            <person name="Gnerre S."/>
            <person name="Goldstein S."/>
            <person name="Grafham D.V."/>
            <person name="Grocock R."/>
            <person name="Hafez N."/>
            <person name="Hagopian D.S."/>
            <person name="Hart E."/>
            <person name="Norman C.H."/>
            <person name="Humphray S."/>
            <person name="Jaffe D.B."/>
            <person name="Jones M."/>
            <person name="Kamal M."/>
            <person name="Khodiyar V.K."/>
            <person name="LaButti K."/>
            <person name="Laird G."/>
            <person name="Lehoczky J."/>
            <person name="Liu X."/>
            <person name="Lokyitsang T."/>
            <person name="Loveland J."/>
            <person name="Lui A."/>
            <person name="Macdonald P."/>
            <person name="Major J.E."/>
            <person name="Matthews L."/>
            <person name="Mauceli E."/>
            <person name="McCarroll S.A."/>
            <person name="Mihalev A.H."/>
            <person name="Mudge J."/>
            <person name="Nguyen C."/>
            <person name="Nicol R."/>
            <person name="O'Leary S.B."/>
            <person name="Osoegawa K."/>
            <person name="Schwartz D.C."/>
            <person name="Shaw-Smith C."/>
            <person name="Stankiewicz P."/>
            <person name="Steward C."/>
            <person name="Swarbreck D."/>
            <person name="Venkataraman V."/>
            <person name="Whittaker C.A."/>
            <person name="Yang X."/>
            <person name="Zimmer A.R."/>
            <person name="Bradley A."/>
            <person name="Hubbard T."/>
            <person name="Birren B.W."/>
            <person name="Rogers J."/>
            <person name="Lander E.S."/>
            <person name="Nusbaum C."/>
        </authorList>
    </citation>
    <scope>NUCLEOTIDE SEQUENCE [LARGE SCALE GENOMIC DNA]</scope>
</reference>
<reference key="4">
    <citation type="journal article" date="2004" name="Genome Res.">
        <title>The status, quality, and expansion of the NIH full-length cDNA project: the Mammalian Gene Collection (MGC).</title>
        <authorList>
            <consortium name="The MGC Project Team"/>
        </authorList>
    </citation>
    <scope>NUCLEOTIDE SEQUENCE [LARGE SCALE MRNA] (ISOFORMS 1 AND 3)</scope>
    <source>
        <tissue>Brain</tissue>
    </source>
</reference>
<reference key="5">
    <citation type="submission" date="2003-06" db="EMBL/GenBank/DDBJ databases">
        <title>Construction of cDNA expression library from nasopharyngeal carcinoma tissue and screening of antigenic genes.</title>
        <authorList>
            <person name="Shu J."/>
            <person name="Li G."/>
            <person name="He X."/>
        </authorList>
    </citation>
    <scope>NUCLEOTIDE SEQUENCE [LARGE SCALE MRNA] OF 265-508 (ISOFORM 1/2)</scope>
    <source>
        <tissue>Nasopharyngeal carcinoma</tissue>
    </source>
</reference>
<reference key="6">
    <citation type="journal article" date="2007" name="BMC Genomics">
        <title>The full-ORF clone resource of the German cDNA consortium.</title>
        <authorList>
            <person name="Bechtel S."/>
            <person name="Rosenfelder H."/>
            <person name="Duda A."/>
            <person name="Schmidt C.P."/>
            <person name="Ernst U."/>
            <person name="Wellenreuther R."/>
            <person name="Mehrle A."/>
            <person name="Schuster C."/>
            <person name="Bahr A."/>
            <person name="Bloecker H."/>
            <person name="Heubner D."/>
            <person name="Hoerlein A."/>
            <person name="Michel G."/>
            <person name="Wedler H."/>
            <person name="Koehrer K."/>
            <person name="Ottenwaelder B."/>
            <person name="Poustka A."/>
            <person name="Wiemann S."/>
            <person name="Schupp I."/>
        </authorList>
    </citation>
    <scope>NUCLEOTIDE SEQUENCE [LARGE SCALE MRNA] OF 356-758 (ISOFORM 2)</scope>
    <source>
        <tissue>Testis</tissue>
    </source>
</reference>
<reference key="7">
    <citation type="journal article" date="2001" name="J. Biol. Chem.">
        <title>Rich, a rho GTPase-activating protein domain-containing protein involved in signaling by Cdc42 and Rac1.</title>
        <authorList>
            <person name="Richnau N."/>
            <person name="Aspenstroem P."/>
        </authorList>
    </citation>
    <scope>FUNCTION AS A GTPASE-ACTIVATING PROTEIN</scope>
    <scope>TISSUE SPECIFICITY</scope>
</reference>
<reference key="8">
    <citation type="journal article" date="2009" name="J. Cell Biol.">
        <title>A CD317/tetherin-RICH2 complex plays a critical role in the organization of the subapical actin cytoskeleton in polarized epithelial cells.</title>
        <authorList>
            <person name="Rollason R."/>
            <person name="Korolchuk V."/>
            <person name="Hamilton C."/>
            <person name="Jepson M."/>
            <person name="Banting G."/>
        </authorList>
    </citation>
    <scope>INTERACTION WITH BST2</scope>
</reference>
<feature type="chain" id="PRO_0000280480" description="Rho GTPase-activating protein 44">
    <location>
        <begin position="1"/>
        <end position="818"/>
    </location>
</feature>
<feature type="domain" description="BAR" evidence="4">
    <location>
        <begin position="14"/>
        <end position="249"/>
    </location>
</feature>
<feature type="domain" description="Rho-GAP" evidence="3">
    <location>
        <begin position="255"/>
        <end position="445"/>
    </location>
</feature>
<feature type="region of interest" description="Disordered" evidence="5">
    <location>
        <begin position="467"/>
        <end position="493"/>
    </location>
</feature>
<feature type="region of interest" description="Disordered" evidence="5">
    <location>
        <begin position="530"/>
        <end position="772"/>
    </location>
</feature>
<feature type="region of interest" description="Interaction with BST2" evidence="7">
    <location>
        <begin position="731"/>
        <end position="818"/>
    </location>
</feature>
<feature type="region of interest" description="Disordered" evidence="5">
    <location>
        <begin position="789"/>
        <end position="818"/>
    </location>
</feature>
<feature type="short sequence motif" description="PDZ-binding" evidence="11">
    <location>
        <begin position="815"/>
        <end position="818"/>
    </location>
</feature>
<feature type="compositionally biased region" description="Basic and acidic residues" evidence="5">
    <location>
        <begin position="479"/>
        <end position="489"/>
    </location>
</feature>
<feature type="compositionally biased region" description="Low complexity" evidence="5">
    <location>
        <begin position="563"/>
        <end position="579"/>
    </location>
</feature>
<feature type="compositionally biased region" description="Polar residues" evidence="5">
    <location>
        <begin position="598"/>
        <end position="611"/>
    </location>
</feature>
<feature type="compositionally biased region" description="Low complexity" evidence="5">
    <location>
        <begin position="614"/>
        <end position="641"/>
    </location>
</feature>
<feature type="compositionally biased region" description="Low complexity" evidence="5">
    <location>
        <begin position="688"/>
        <end position="708"/>
    </location>
</feature>
<feature type="compositionally biased region" description="Polar residues" evidence="5">
    <location>
        <begin position="746"/>
        <end position="757"/>
    </location>
</feature>
<feature type="compositionally biased region" description="Basic and acidic residues" evidence="5">
    <location>
        <begin position="794"/>
        <end position="809"/>
    </location>
</feature>
<feature type="site" description="Arginine finger; crucial for GTP hydrolysis by stabilizing the transition state" evidence="3">
    <location>
        <position position="291"/>
    </location>
</feature>
<feature type="modified residue" description="Phosphoserine" evidence="2">
    <location>
        <position position="493"/>
    </location>
</feature>
<feature type="modified residue" description="Phosphoserine" evidence="1">
    <location>
        <position position="809"/>
    </location>
</feature>
<feature type="splice variant" id="VSP_053616" description="In isoform 2 and isoform 3." evidence="8 9 10">
    <location>
        <begin position="509"/>
        <end position="514"/>
    </location>
</feature>
<feature type="splice variant" id="VSP_053617" description="In isoform 2." evidence="10">
    <original>DL</original>
    <variation>AV</variation>
    <location>
        <begin position="773"/>
        <end position="774"/>
    </location>
</feature>
<feature type="splice variant" id="VSP_053618" description="In isoform 2." evidence="10">
    <location>
        <begin position="775"/>
        <end position="818"/>
    </location>
</feature>
<feature type="sequence variant" id="VAR_031159" description="In dbSNP:rs3213688.">
    <original>V</original>
    <variation>M</variation>
    <location>
        <position position="463"/>
    </location>
</feature>
<feature type="sequence conflict" description="In Ref. 5; AAP73805." evidence="11" ref="5">
    <original>E</original>
    <variation>G</variation>
    <location>
        <position position="346"/>
    </location>
</feature>
<feature type="sequence conflict" description="In Ref. 6; CAB46376." evidence="11" ref="6">
    <original>R</original>
    <variation>M</variation>
    <location>
        <position position="518"/>
    </location>
</feature>
<feature type="sequence conflict" description="In Ref. 1; BAA31647." evidence="11" ref="1">
    <original>P</original>
    <variation>L</variation>
    <location>
        <position position="674"/>
    </location>
</feature>
<feature type="short sequence motif" description="PDZ-binding">
    <location sequence="Q17R89-2">
        <begin position="764"/>
        <end position="767"/>
    </location>
</feature>